<proteinExistence type="inferred from homology"/>
<evidence type="ECO:0000250" key="1">
    <source>
        <dbReference type="UniProtKB" id="Q66GR3"/>
    </source>
</evidence>
<evidence type="ECO:0000250" key="2">
    <source>
        <dbReference type="UniProtKB" id="Q8H102"/>
    </source>
</evidence>
<evidence type="ECO:0000255" key="3">
    <source>
        <dbReference type="PROSITE-ProRule" id="PRU00981"/>
    </source>
</evidence>
<evidence type="ECO:0000256" key="4">
    <source>
        <dbReference type="SAM" id="MobiDB-lite"/>
    </source>
</evidence>
<evidence type="ECO:0000305" key="5"/>
<gene>
    <name type="primary">BHLH129</name>
    <name type="synonym">EN73</name>
    <name type="ordered locus">At2g43140</name>
    <name type="ORF">F14B2.8</name>
</gene>
<keyword id="KW-0025">Alternative splicing</keyword>
<keyword id="KW-0238">DNA-binding</keyword>
<keyword id="KW-0539">Nucleus</keyword>
<keyword id="KW-0597">Phosphoprotein</keyword>
<keyword id="KW-1185">Reference proteome</keyword>
<keyword id="KW-0804">Transcription</keyword>
<keyword id="KW-0805">Transcription regulation</keyword>
<accession>Q9ZW81</accession>
<name>BH129_ARATH</name>
<comment type="subunit">
    <text evidence="5">Homodimer.</text>
</comment>
<comment type="subcellular location">
    <subcellularLocation>
        <location evidence="3">Nucleus</location>
    </subcellularLocation>
</comment>
<comment type="alternative products">
    <event type="alternative splicing"/>
    <isoform>
        <id>Q9ZW81-1</id>
        <name>1</name>
        <sequence type="displayed"/>
    </isoform>
    <text>A number of isoforms are produced. According to EST sequences.</text>
</comment>
<comment type="sequence caution" evidence="5">
    <conflict type="erroneous gene model prediction">
        <sequence resource="EMBL-CDS" id="AAC64303"/>
    </conflict>
</comment>
<organism>
    <name type="scientific">Arabidopsis thaliana</name>
    <name type="common">Mouse-ear cress</name>
    <dbReference type="NCBI Taxonomy" id="3702"/>
    <lineage>
        <taxon>Eukaryota</taxon>
        <taxon>Viridiplantae</taxon>
        <taxon>Streptophyta</taxon>
        <taxon>Embryophyta</taxon>
        <taxon>Tracheophyta</taxon>
        <taxon>Spermatophyta</taxon>
        <taxon>Magnoliopsida</taxon>
        <taxon>eudicotyledons</taxon>
        <taxon>Gunneridae</taxon>
        <taxon>Pentapetalae</taxon>
        <taxon>rosids</taxon>
        <taxon>malvids</taxon>
        <taxon>Brassicales</taxon>
        <taxon>Brassicaceae</taxon>
        <taxon>Camelineae</taxon>
        <taxon>Arabidopsis</taxon>
    </lineage>
</organism>
<reference key="1">
    <citation type="journal article" date="1999" name="Nature">
        <title>Sequence and analysis of chromosome 2 of the plant Arabidopsis thaliana.</title>
        <authorList>
            <person name="Lin X."/>
            <person name="Kaul S."/>
            <person name="Rounsley S.D."/>
            <person name="Shea T.P."/>
            <person name="Benito M.-I."/>
            <person name="Town C.D."/>
            <person name="Fujii C.Y."/>
            <person name="Mason T.M."/>
            <person name="Bowman C.L."/>
            <person name="Barnstead M.E."/>
            <person name="Feldblyum T.V."/>
            <person name="Buell C.R."/>
            <person name="Ketchum K.A."/>
            <person name="Lee J.J."/>
            <person name="Ronning C.M."/>
            <person name="Koo H.L."/>
            <person name="Moffat K.S."/>
            <person name="Cronin L.A."/>
            <person name="Shen M."/>
            <person name="Pai G."/>
            <person name="Van Aken S."/>
            <person name="Umayam L."/>
            <person name="Tallon L.J."/>
            <person name="Gill J.E."/>
            <person name="Adams M.D."/>
            <person name="Carrera A.J."/>
            <person name="Creasy T.H."/>
            <person name="Goodman H.M."/>
            <person name="Somerville C.R."/>
            <person name="Copenhaver G.P."/>
            <person name="Preuss D."/>
            <person name="Nierman W.C."/>
            <person name="White O."/>
            <person name="Eisen J.A."/>
            <person name="Salzberg S.L."/>
            <person name="Fraser C.M."/>
            <person name="Venter J.C."/>
        </authorList>
    </citation>
    <scope>NUCLEOTIDE SEQUENCE [LARGE SCALE GENOMIC DNA]</scope>
    <source>
        <strain>cv. Columbia</strain>
    </source>
</reference>
<reference key="2">
    <citation type="journal article" date="2017" name="Plant J.">
        <title>Araport11: a complete reannotation of the Arabidopsis thaliana reference genome.</title>
        <authorList>
            <person name="Cheng C.Y."/>
            <person name="Krishnakumar V."/>
            <person name="Chan A.P."/>
            <person name="Thibaud-Nissen F."/>
            <person name="Schobel S."/>
            <person name="Town C.D."/>
        </authorList>
    </citation>
    <scope>GENOME REANNOTATION</scope>
    <source>
        <strain>cv. Columbia</strain>
    </source>
</reference>
<reference key="3">
    <citation type="journal article" date="2003" name="Mol. Biol. Evol.">
        <title>The basic helix-loop-helix transcription factor family in plants: a genome-wide study of protein structure and functional diversity.</title>
        <authorList>
            <person name="Heim M.A."/>
            <person name="Jakoby M."/>
            <person name="Werber M."/>
            <person name="Martin C."/>
            <person name="Weisshaar B."/>
            <person name="Bailey P.C."/>
        </authorList>
    </citation>
    <scope>GENE FAMILY</scope>
    <scope>NOMENCLATURE</scope>
</reference>
<reference key="4">
    <citation type="journal article" date="2003" name="Plant Cell">
        <title>The Arabidopsis basic/helix-loop-helix transcription factor family.</title>
        <authorList>
            <person name="Toledo-Ortiz G."/>
            <person name="Huq E."/>
            <person name="Quail P.H."/>
        </authorList>
    </citation>
    <scope>GENE FAMILY</scope>
</reference>
<reference key="5">
    <citation type="journal article" date="2003" name="Plant Cell">
        <title>Update on the basic helix-loop-helix transcription factor gene family in Arabidopsis thaliana.</title>
        <authorList>
            <person name="Bailey P.C."/>
            <person name="Martin C."/>
            <person name="Toledo-Ortiz G."/>
            <person name="Quail P.H."/>
            <person name="Huq E."/>
            <person name="Heim M.A."/>
            <person name="Jakoby M."/>
            <person name="Werber M."/>
            <person name="Weisshaar B."/>
        </authorList>
    </citation>
    <scope>GENE FAMILY</scope>
    <scope>NOMENCLATURE</scope>
</reference>
<protein>
    <recommendedName>
        <fullName>Transcription factor bHLH129</fullName>
    </recommendedName>
    <alternativeName>
        <fullName>Basic helix-loop-helix protein 129</fullName>
        <shortName>AtbHLH129</shortName>
        <shortName>bHLH 129</shortName>
    </alternativeName>
    <alternativeName>
        <fullName>Transcription factor EN 73</fullName>
    </alternativeName>
    <alternativeName>
        <fullName>bHLH transcription factor bHLH129</fullName>
    </alternativeName>
</protein>
<dbReference type="EMBL" id="AC004450">
    <property type="protein sequence ID" value="AAC64303.1"/>
    <property type="status" value="ALT_SEQ"/>
    <property type="molecule type" value="Genomic_DNA"/>
</dbReference>
<dbReference type="EMBL" id="CP002685">
    <property type="status" value="NOT_ANNOTATED_CDS"/>
    <property type="molecule type" value="Genomic_DNA"/>
</dbReference>
<dbReference type="PIR" id="E84862">
    <property type="entry name" value="E84862"/>
</dbReference>
<dbReference type="SMR" id="Q9ZW81"/>
<dbReference type="BioGRID" id="4253">
    <property type="interactions" value="3"/>
</dbReference>
<dbReference type="FunCoup" id="Q9ZW81">
    <property type="interactions" value="93"/>
</dbReference>
<dbReference type="IntAct" id="Q9ZW81">
    <property type="interactions" value="3"/>
</dbReference>
<dbReference type="STRING" id="3702.Q9ZW81"/>
<dbReference type="PaxDb" id="3702-AT2G43140.2"/>
<dbReference type="Araport" id="AT2G43140"/>
<dbReference type="TAIR" id="AT2G43140">
    <property type="gene designation" value="BHLH129"/>
</dbReference>
<dbReference type="eggNOG" id="ENOG502QVKF">
    <property type="taxonomic scope" value="Eukaryota"/>
</dbReference>
<dbReference type="InParanoid" id="Q9ZW81"/>
<dbReference type="PhylomeDB" id="Q9ZW81"/>
<dbReference type="PRO" id="PR:Q9ZW81"/>
<dbReference type="Proteomes" id="UP000006548">
    <property type="component" value="Chromosome 2"/>
</dbReference>
<dbReference type="ExpressionAtlas" id="Q9ZW81">
    <property type="expression patterns" value="baseline and differential"/>
</dbReference>
<dbReference type="GO" id="GO:0005634">
    <property type="term" value="C:nucleus"/>
    <property type="evidence" value="ECO:0000318"/>
    <property type="project" value="GO_Central"/>
</dbReference>
<dbReference type="GO" id="GO:0000981">
    <property type="term" value="F:DNA-binding transcription factor activity, RNA polymerase II-specific"/>
    <property type="evidence" value="ECO:0000318"/>
    <property type="project" value="GO_Central"/>
</dbReference>
<dbReference type="GO" id="GO:0046983">
    <property type="term" value="F:protein dimerization activity"/>
    <property type="evidence" value="ECO:0007669"/>
    <property type="project" value="InterPro"/>
</dbReference>
<dbReference type="GO" id="GO:0000978">
    <property type="term" value="F:RNA polymerase II cis-regulatory region sequence-specific DNA binding"/>
    <property type="evidence" value="ECO:0000318"/>
    <property type="project" value="GO_Central"/>
</dbReference>
<dbReference type="GO" id="GO:0006357">
    <property type="term" value="P:regulation of transcription by RNA polymerase II"/>
    <property type="evidence" value="ECO:0000318"/>
    <property type="project" value="GO_Central"/>
</dbReference>
<dbReference type="CDD" id="cd11393">
    <property type="entry name" value="bHLH_AtbHLH_like"/>
    <property type="match status" value="1"/>
</dbReference>
<dbReference type="Gene3D" id="4.10.280.10">
    <property type="entry name" value="Helix-loop-helix DNA-binding domain"/>
    <property type="match status" value="1"/>
</dbReference>
<dbReference type="InterPro" id="IPR045239">
    <property type="entry name" value="bHLH95_bHLH"/>
</dbReference>
<dbReference type="InterPro" id="IPR011598">
    <property type="entry name" value="bHLH_dom"/>
</dbReference>
<dbReference type="InterPro" id="IPR036638">
    <property type="entry name" value="HLH_DNA-bd_sf"/>
</dbReference>
<dbReference type="InterPro" id="IPR045843">
    <property type="entry name" value="IND-like"/>
</dbReference>
<dbReference type="PANTHER" id="PTHR16223:SF177">
    <property type="entry name" value="TRANSCRIPTION FACTOR BHLH129"/>
    <property type="match status" value="1"/>
</dbReference>
<dbReference type="PANTHER" id="PTHR16223">
    <property type="entry name" value="TRANSCRIPTION FACTOR BHLH83-RELATED"/>
    <property type="match status" value="1"/>
</dbReference>
<dbReference type="Pfam" id="PF00010">
    <property type="entry name" value="HLH"/>
    <property type="match status" value="1"/>
</dbReference>
<dbReference type="SMART" id="SM00353">
    <property type="entry name" value="HLH"/>
    <property type="match status" value="1"/>
</dbReference>
<dbReference type="SUPFAM" id="SSF47459">
    <property type="entry name" value="HLH, helix-loop-helix DNA-binding domain"/>
    <property type="match status" value="1"/>
</dbReference>
<dbReference type="PROSITE" id="PS50888">
    <property type="entry name" value="BHLH"/>
    <property type="match status" value="1"/>
</dbReference>
<sequence length="297" mass="32431">MYPPNSSKSTAHDGGGDADTNQYDSAAGATRDFSSLGPQTHHHPPPQRQQQHQQNPNLVGHYLPGEPSSIGFDSNASSSSSLFRHRSSPAGFYDQHLPTDPNGTGFSLGRPNGGYGGGGEQGPSRLKSELRFSSGSSSHQEHNSLPRISEVEAAAAARNGVASSSMSFGNNRTNNWDNSSSHISFTIDQPGKRSKNSDFFTLETQYSMPQTTLEMATMENLMNIPEDSVPCRARAKRGFATHPRSIAERERRTRISGKLKKLQELVPNMDKQTSYADMLDLAVEHIKGLQHQVEVRP</sequence>
<feature type="chain" id="PRO_0000358813" description="Transcription factor bHLH129">
    <location>
        <begin position="1"/>
        <end position="297"/>
    </location>
</feature>
<feature type="domain" description="bHLH" evidence="3">
    <location>
        <begin position="239"/>
        <end position="289"/>
    </location>
</feature>
<feature type="region of interest" description="Disordered" evidence="4">
    <location>
        <begin position="1"/>
        <end position="145"/>
    </location>
</feature>
<feature type="compositionally biased region" description="Low complexity" evidence="4">
    <location>
        <begin position="68"/>
        <end position="82"/>
    </location>
</feature>
<feature type="compositionally biased region" description="Gly residues" evidence="4">
    <location>
        <begin position="111"/>
        <end position="121"/>
    </location>
</feature>
<feature type="modified residue" description="Phosphoserine" evidence="1">
    <location>
        <position position="35"/>
    </location>
</feature>
<feature type="modified residue" description="Phosphoserine" evidence="2">
    <location>
        <position position="138"/>
    </location>
</feature>